<feature type="chain" id="PRO_0000359411" description="Probable beta-1,3-galactosyltransferase 1">
    <location>
        <begin position="1"/>
        <end position="384"/>
    </location>
</feature>
<feature type="transmembrane region" description="Helical; Signal-anchor for type II membrane protein" evidence="2">
    <location>
        <begin position="21"/>
        <end position="43"/>
    </location>
</feature>
<feature type="glycosylation site" description="N-linked (GlcNAc...) asparagine" evidence="2">
    <location>
        <position position="73"/>
    </location>
</feature>
<feature type="glycosylation site" description="N-linked (GlcNAc...) asparagine" evidence="2">
    <location>
        <position position="105"/>
    </location>
</feature>
<sequence>MSFKNRGDYNFTPRNVVSRNSVFFMCLASFCLGMFFTNRMWNIVPEARGISRLSKLSLSSSDCDKKNVLDYGNNTIGILDKSISNLEMKLVAARAERESLSGKFNISNEAKKRKYFMVIGINTAFSSRKRRDSVRSTWMPQGENLKKLEEEKGIIVRFVIGHSVLSHGILDKAIEAEEKTHGDFLRLEHTEGYMKLSAKTKTFFATAVSLWDAEFYIKVDDDVHVNLASLKKALSAHQNKPRVYVGCMKSGPVLARKSVKYHEPEYWKFGEVGNKYFRHATGQFYAISKDLATYILINQDLLHKYANEDVSLGSWFIGLNVEHVDEKRLCCSTSQDCELKAMMGHVCAASFDWKCSGICRSAERMADVHERCGEPQNALWTSNS</sequence>
<comment type="function">
    <text evidence="1">Beta-1,3-galactosyltransferase that transfers galactose from UDP-galactose to substrates with a terminal glycosyl residue.</text>
</comment>
<comment type="cofactor">
    <cofactor evidence="1">
        <name>Mn(2+)</name>
        <dbReference type="ChEBI" id="CHEBI:29035"/>
    </cofactor>
</comment>
<comment type="pathway">
    <text>Protein modification; protein glycosylation.</text>
</comment>
<comment type="subcellular location">
    <subcellularLocation>
        <location evidence="3">Golgi apparatus membrane</location>
        <topology evidence="3">Single-pass type II membrane protein</topology>
    </subcellularLocation>
</comment>
<comment type="similarity">
    <text evidence="3">Belongs to the glycosyltransferase 31 family.</text>
</comment>
<comment type="sequence caution" evidence="3">
    <conflict type="erroneous gene model prediction">
        <sequence resource="EMBL-CDS" id="AAD30250"/>
    </conflict>
</comment>
<dbReference type="EC" id="2.4.1.-"/>
<dbReference type="EMBL" id="AC007296">
    <property type="protein sequence ID" value="AAD30250.1"/>
    <property type="status" value="ALT_SEQ"/>
    <property type="molecule type" value="Genomic_DNA"/>
</dbReference>
<dbReference type="EMBL" id="CP002684">
    <property type="protein sequence ID" value="AEE28776.1"/>
    <property type="molecule type" value="Genomic_DNA"/>
</dbReference>
<dbReference type="PIR" id="A86251">
    <property type="entry name" value="A86251"/>
</dbReference>
<dbReference type="RefSeq" id="NP_172638.1">
    <property type="nucleotide sequence ID" value="NM_101045.2"/>
</dbReference>
<dbReference type="SMR" id="Q9SAA4"/>
<dbReference type="BioGRID" id="22957">
    <property type="interactions" value="1"/>
</dbReference>
<dbReference type="FunCoup" id="Q9SAA4">
    <property type="interactions" value="1616"/>
</dbReference>
<dbReference type="STRING" id="3702.Q9SAA4"/>
<dbReference type="CAZy" id="GT31">
    <property type="family name" value="Glycosyltransferase Family 31"/>
</dbReference>
<dbReference type="GlyCosmos" id="Q9SAA4">
    <property type="glycosylation" value="2 sites, No reported glycans"/>
</dbReference>
<dbReference type="GlyGen" id="Q9SAA4">
    <property type="glycosylation" value="2 sites"/>
</dbReference>
<dbReference type="PaxDb" id="3702-AT1G11730.1"/>
<dbReference type="ProteomicsDB" id="241113"/>
<dbReference type="EnsemblPlants" id="AT1G11730.1">
    <property type="protein sequence ID" value="AT1G11730.1"/>
    <property type="gene ID" value="AT1G11730"/>
</dbReference>
<dbReference type="GeneID" id="837717"/>
<dbReference type="Gramene" id="AT1G11730.1">
    <property type="protein sequence ID" value="AT1G11730.1"/>
    <property type="gene ID" value="AT1G11730"/>
</dbReference>
<dbReference type="KEGG" id="ath:AT1G11730"/>
<dbReference type="Araport" id="AT1G11730"/>
<dbReference type="TAIR" id="AT1G11730"/>
<dbReference type="eggNOG" id="KOG2288">
    <property type="taxonomic scope" value="Eukaryota"/>
</dbReference>
<dbReference type="HOGENOM" id="CLU_040730_3_0_1"/>
<dbReference type="InParanoid" id="Q9SAA4"/>
<dbReference type="OMA" id="TEGYMEL"/>
<dbReference type="PhylomeDB" id="Q9SAA4"/>
<dbReference type="UniPathway" id="UPA00378"/>
<dbReference type="PRO" id="PR:Q9SAA4"/>
<dbReference type="Proteomes" id="UP000006548">
    <property type="component" value="Chromosome 1"/>
</dbReference>
<dbReference type="ExpressionAtlas" id="Q9SAA4">
    <property type="expression patterns" value="baseline and differential"/>
</dbReference>
<dbReference type="GO" id="GO:0000139">
    <property type="term" value="C:Golgi membrane"/>
    <property type="evidence" value="ECO:0007669"/>
    <property type="project" value="UniProtKB-SubCell"/>
</dbReference>
<dbReference type="GO" id="GO:0016758">
    <property type="term" value="F:hexosyltransferase activity"/>
    <property type="evidence" value="ECO:0007669"/>
    <property type="project" value="InterPro"/>
</dbReference>
<dbReference type="GO" id="GO:0006486">
    <property type="term" value="P:protein glycosylation"/>
    <property type="evidence" value="ECO:0007669"/>
    <property type="project" value="UniProtKB-UniPathway"/>
</dbReference>
<dbReference type="FunFam" id="3.90.550.50:FF:000011">
    <property type="entry name" value="Hexosyltransferase"/>
    <property type="match status" value="1"/>
</dbReference>
<dbReference type="Gene3D" id="3.90.550.50">
    <property type="match status" value="1"/>
</dbReference>
<dbReference type="InterPro" id="IPR025298">
    <property type="entry name" value="DUF4094"/>
</dbReference>
<dbReference type="InterPro" id="IPR002659">
    <property type="entry name" value="Glyco_trans_31"/>
</dbReference>
<dbReference type="PANTHER" id="PTHR11214:SF343">
    <property type="entry name" value="BETA-1,3-GALACTOSYLTRANSFERASE 1-RELATED"/>
    <property type="match status" value="1"/>
</dbReference>
<dbReference type="PANTHER" id="PTHR11214">
    <property type="entry name" value="BETA-1,3-N-ACETYLGLUCOSAMINYLTRANSFERASE"/>
    <property type="match status" value="1"/>
</dbReference>
<dbReference type="Pfam" id="PF13334">
    <property type="entry name" value="DUF4094"/>
    <property type="match status" value="1"/>
</dbReference>
<dbReference type="Pfam" id="PF01762">
    <property type="entry name" value="Galactosyl_T"/>
    <property type="match status" value="1"/>
</dbReference>
<keyword id="KW-0325">Glycoprotein</keyword>
<keyword id="KW-0328">Glycosyltransferase</keyword>
<keyword id="KW-0333">Golgi apparatus</keyword>
<keyword id="KW-0464">Manganese</keyword>
<keyword id="KW-0472">Membrane</keyword>
<keyword id="KW-1185">Reference proteome</keyword>
<keyword id="KW-0735">Signal-anchor</keyword>
<keyword id="KW-0808">Transferase</keyword>
<keyword id="KW-0812">Transmembrane</keyword>
<keyword id="KW-1133">Transmembrane helix</keyword>
<evidence type="ECO:0000250" key="1"/>
<evidence type="ECO:0000255" key="2"/>
<evidence type="ECO:0000305" key="3"/>
<organism>
    <name type="scientific">Arabidopsis thaliana</name>
    <name type="common">Mouse-ear cress</name>
    <dbReference type="NCBI Taxonomy" id="3702"/>
    <lineage>
        <taxon>Eukaryota</taxon>
        <taxon>Viridiplantae</taxon>
        <taxon>Streptophyta</taxon>
        <taxon>Embryophyta</taxon>
        <taxon>Tracheophyta</taxon>
        <taxon>Spermatophyta</taxon>
        <taxon>Magnoliopsida</taxon>
        <taxon>eudicotyledons</taxon>
        <taxon>Gunneridae</taxon>
        <taxon>Pentapetalae</taxon>
        <taxon>rosids</taxon>
        <taxon>malvids</taxon>
        <taxon>Brassicales</taxon>
        <taxon>Brassicaceae</taxon>
        <taxon>Camelineae</taxon>
        <taxon>Arabidopsis</taxon>
    </lineage>
</organism>
<proteinExistence type="evidence at transcript level"/>
<protein>
    <recommendedName>
        <fullName>Probable beta-1,3-galactosyltransferase 1</fullName>
        <ecNumber>2.4.1.-</ecNumber>
    </recommendedName>
</protein>
<accession>Q9SAA4</accession>
<gene>
    <name type="primary">B3GALT1</name>
    <name type="ordered locus">At1g11730</name>
    <name type="ORF">F25C20.12</name>
</gene>
<name>B3GT1_ARATH</name>
<reference key="1">
    <citation type="journal article" date="2000" name="Nature">
        <title>Sequence and analysis of chromosome 1 of the plant Arabidopsis thaliana.</title>
        <authorList>
            <person name="Theologis A."/>
            <person name="Ecker J.R."/>
            <person name="Palm C.J."/>
            <person name="Federspiel N.A."/>
            <person name="Kaul S."/>
            <person name="White O."/>
            <person name="Alonso J."/>
            <person name="Altafi H."/>
            <person name="Araujo R."/>
            <person name="Bowman C.L."/>
            <person name="Brooks S.Y."/>
            <person name="Buehler E."/>
            <person name="Chan A."/>
            <person name="Chao Q."/>
            <person name="Chen H."/>
            <person name="Cheuk R.F."/>
            <person name="Chin C.W."/>
            <person name="Chung M.K."/>
            <person name="Conn L."/>
            <person name="Conway A.B."/>
            <person name="Conway A.R."/>
            <person name="Creasy T.H."/>
            <person name="Dewar K."/>
            <person name="Dunn P."/>
            <person name="Etgu P."/>
            <person name="Feldblyum T.V."/>
            <person name="Feng J.-D."/>
            <person name="Fong B."/>
            <person name="Fujii C.Y."/>
            <person name="Gill J.E."/>
            <person name="Goldsmith A.D."/>
            <person name="Haas B."/>
            <person name="Hansen N.F."/>
            <person name="Hughes B."/>
            <person name="Huizar L."/>
            <person name="Hunter J.L."/>
            <person name="Jenkins J."/>
            <person name="Johnson-Hopson C."/>
            <person name="Khan S."/>
            <person name="Khaykin E."/>
            <person name="Kim C.J."/>
            <person name="Koo H.L."/>
            <person name="Kremenetskaia I."/>
            <person name="Kurtz D.B."/>
            <person name="Kwan A."/>
            <person name="Lam B."/>
            <person name="Langin-Hooper S."/>
            <person name="Lee A."/>
            <person name="Lee J.M."/>
            <person name="Lenz C.A."/>
            <person name="Li J.H."/>
            <person name="Li Y.-P."/>
            <person name="Lin X."/>
            <person name="Liu S.X."/>
            <person name="Liu Z.A."/>
            <person name="Luros J.S."/>
            <person name="Maiti R."/>
            <person name="Marziali A."/>
            <person name="Militscher J."/>
            <person name="Miranda M."/>
            <person name="Nguyen M."/>
            <person name="Nierman W.C."/>
            <person name="Osborne B.I."/>
            <person name="Pai G."/>
            <person name="Peterson J."/>
            <person name="Pham P.K."/>
            <person name="Rizzo M."/>
            <person name="Rooney T."/>
            <person name="Rowley D."/>
            <person name="Sakano H."/>
            <person name="Salzberg S.L."/>
            <person name="Schwartz J.R."/>
            <person name="Shinn P."/>
            <person name="Southwick A.M."/>
            <person name="Sun H."/>
            <person name="Tallon L.J."/>
            <person name="Tambunga G."/>
            <person name="Toriumi M.J."/>
            <person name="Town C.D."/>
            <person name="Utterback T."/>
            <person name="Van Aken S."/>
            <person name="Vaysberg M."/>
            <person name="Vysotskaia V.S."/>
            <person name="Walker M."/>
            <person name="Wu D."/>
            <person name="Yu G."/>
            <person name="Fraser C.M."/>
            <person name="Venter J.C."/>
            <person name="Davis R.W."/>
        </authorList>
    </citation>
    <scope>NUCLEOTIDE SEQUENCE [LARGE SCALE GENOMIC DNA]</scope>
    <source>
        <strain>cv. Columbia</strain>
    </source>
</reference>
<reference key="2">
    <citation type="journal article" date="2017" name="Plant J.">
        <title>Araport11: a complete reannotation of the Arabidopsis thaliana reference genome.</title>
        <authorList>
            <person name="Cheng C.Y."/>
            <person name="Krishnakumar V."/>
            <person name="Chan A.P."/>
            <person name="Thibaud-Nissen F."/>
            <person name="Schobel S."/>
            <person name="Town C.D."/>
        </authorList>
    </citation>
    <scope>GENOME REANNOTATION</scope>
    <source>
        <strain>cv. Columbia</strain>
    </source>
</reference>
<reference key="3">
    <citation type="journal article" date="2008" name="Plant Mol. Biol.">
        <title>Identification of a novel group of putative Arabidopsis thaliana beta-(1,3)-galactosyltransferases.</title>
        <authorList>
            <person name="Qu Y."/>
            <person name="Egelund J."/>
            <person name="Gilson P.R."/>
            <person name="Houghton F."/>
            <person name="Gleeson P.A."/>
            <person name="Schultz C.J."/>
            <person name="Bacic A."/>
        </authorList>
    </citation>
    <scope>GENE FAMILY</scope>
    <scope>NOMENCLATURE</scope>
</reference>